<reference key="1">
    <citation type="submission" date="2006-12" db="EMBL/GenBank/DDBJ databases">
        <title>Complete sequence of Shewanella amazonensis SB2B.</title>
        <authorList>
            <consortium name="US DOE Joint Genome Institute"/>
            <person name="Copeland A."/>
            <person name="Lucas S."/>
            <person name="Lapidus A."/>
            <person name="Barry K."/>
            <person name="Detter J.C."/>
            <person name="Glavina del Rio T."/>
            <person name="Hammon N."/>
            <person name="Israni S."/>
            <person name="Dalin E."/>
            <person name="Tice H."/>
            <person name="Pitluck S."/>
            <person name="Munk A.C."/>
            <person name="Brettin T."/>
            <person name="Bruce D."/>
            <person name="Han C."/>
            <person name="Tapia R."/>
            <person name="Gilna P."/>
            <person name="Schmutz J."/>
            <person name="Larimer F."/>
            <person name="Land M."/>
            <person name="Hauser L."/>
            <person name="Kyrpides N."/>
            <person name="Mikhailova N."/>
            <person name="Fredrickson J."/>
            <person name="Richardson P."/>
        </authorList>
    </citation>
    <scope>NUCLEOTIDE SEQUENCE [LARGE SCALE GENOMIC DNA]</scope>
    <source>
        <strain>ATCC BAA-1098 / SB2B</strain>
    </source>
</reference>
<comment type="similarity">
    <text evidence="1">Belongs to the UPF0231 family.</text>
</comment>
<protein>
    <recommendedName>
        <fullName evidence="1">UPF0231 protein Sama_0645</fullName>
    </recommendedName>
</protein>
<keyword id="KW-1185">Reference proteome</keyword>
<sequence>MEYEFRRNGLDGSVMARFSMEHEVMGRWFGEELGDKPAATAAVLTAIAAIQAGELREWRLTGREFSLELDEEQARVYANVLGYDNQDELDDGMSLYDAELEASCGLEDLEAALQSWQAFLVETR</sequence>
<proteinExistence type="inferred from homology"/>
<evidence type="ECO:0000255" key="1">
    <source>
        <dbReference type="HAMAP-Rule" id="MF_01053"/>
    </source>
</evidence>
<name>Y645_SHEAM</name>
<gene>
    <name type="ordered locus">Sama_0645</name>
</gene>
<accession>A1S397</accession>
<organism>
    <name type="scientific">Shewanella amazonensis (strain ATCC BAA-1098 / SB2B)</name>
    <dbReference type="NCBI Taxonomy" id="326297"/>
    <lineage>
        <taxon>Bacteria</taxon>
        <taxon>Pseudomonadati</taxon>
        <taxon>Pseudomonadota</taxon>
        <taxon>Gammaproteobacteria</taxon>
        <taxon>Alteromonadales</taxon>
        <taxon>Shewanellaceae</taxon>
        <taxon>Shewanella</taxon>
    </lineage>
</organism>
<dbReference type="EMBL" id="CP000507">
    <property type="protein sequence ID" value="ABL98853.1"/>
    <property type="molecule type" value="Genomic_DNA"/>
</dbReference>
<dbReference type="RefSeq" id="WP_011758763.1">
    <property type="nucleotide sequence ID" value="NC_008700.1"/>
</dbReference>
<dbReference type="STRING" id="326297.Sama_0645"/>
<dbReference type="KEGG" id="saz:Sama_0645"/>
<dbReference type="eggNOG" id="COG3112">
    <property type="taxonomic scope" value="Bacteria"/>
</dbReference>
<dbReference type="HOGENOM" id="CLU_139226_1_0_6"/>
<dbReference type="OrthoDB" id="5739292at2"/>
<dbReference type="Proteomes" id="UP000009175">
    <property type="component" value="Chromosome"/>
</dbReference>
<dbReference type="HAMAP" id="MF_01053">
    <property type="entry name" value="UPF0231"/>
    <property type="match status" value="1"/>
</dbReference>
<dbReference type="InterPro" id="IPR008249">
    <property type="entry name" value="UPF0231"/>
</dbReference>
<dbReference type="NCBIfam" id="NF003582">
    <property type="entry name" value="PRK05248.3-3"/>
    <property type="match status" value="1"/>
</dbReference>
<dbReference type="Pfam" id="PF06062">
    <property type="entry name" value="UPF0231"/>
    <property type="match status" value="1"/>
</dbReference>
<dbReference type="PIRSF" id="PIRSF006287">
    <property type="entry name" value="UCP006287"/>
    <property type="match status" value="1"/>
</dbReference>
<feature type="chain" id="PRO_1000064366" description="UPF0231 protein Sama_0645">
    <location>
        <begin position="1"/>
        <end position="124"/>
    </location>
</feature>